<sequence length="468" mass="51981">MRIEHDFIGQMEISDEVYYGIQTLRASENFFITNDKLCSYPVFIKSFAQVKKAATLANVQLGLIDEKLKIAICHACDLLIDGKYHDQFIVDMIQGGAGTSTNMNMNEVIANLALEYMGHQKGEYQFCHPNDHVNRSQSTNDAYPSALKIAIYERLSNLVAPMKALRDAFAQKAKEFAHVIKMGRTQLQDAVPMTLGQEFETYALMVDRDIEQVLDARNWVRELNLGGTAIGTGINSHPDYRSLIEKKIQEVTGRPFVMANNLIEATQSTGAYVQVSGVLKRIAVKLSKVCNDLRLLSSGPRAGLNEINLPKMQPGSSIMPGKVNPVIPEVVNQVCFAVIGNDLSVALAAEGGQLQLNVFEPVIAYKLFHSFVILGRAIETLTTKCVEGITANEKICHDYVFNSIGIVTALNPHIGYEKSAMIAKEALKSDRSIYDIALEKKILTKEQLDDIFKPENMLSPHAFKKHKD</sequence>
<organism>
    <name type="scientific">Helicobacter pylori (strain ATCC 700392 / 26695)</name>
    <name type="common">Campylobacter pylori</name>
    <dbReference type="NCBI Taxonomy" id="85962"/>
    <lineage>
        <taxon>Bacteria</taxon>
        <taxon>Pseudomonadati</taxon>
        <taxon>Campylobacterota</taxon>
        <taxon>Epsilonproteobacteria</taxon>
        <taxon>Campylobacterales</taxon>
        <taxon>Helicobacteraceae</taxon>
        <taxon>Helicobacter</taxon>
    </lineage>
</organism>
<keyword id="KW-0456">Lyase</keyword>
<keyword id="KW-1185">Reference proteome</keyword>
<accession>P56149</accession>
<feature type="chain" id="PRO_0000161342" description="Aspartate ammonia-lyase">
    <location>
        <begin position="1"/>
        <end position="468"/>
    </location>
</feature>
<feature type="region of interest" description="SS loop" evidence="2">
    <location>
        <begin position="315"/>
        <end position="324"/>
    </location>
</feature>
<feature type="active site" description="Proton acceptor" evidence="2">
    <location>
        <position position="316"/>
    </location>
</feature>
<feature type="binding site" evidence="2">
    <location>
        <position position="99"/>
    </location>
    <ligand>
        <name>L-aspartate</name>
        <dbReference type="ChEBI" id="CHEBI:29991"/>
    </ligand>
</feature>
<feature type="binding site" evidence="2">
    <location>
        <position position="138"/>
    </location>
    <ligand>
        <name>L-aspartate</name>
        <dbReference type="ChEBI" id="CHEBI:29991"/>
    </ligand>
</feature>
<feature type="binding site" evidence="2">
    <location>
        <position position="139"/>
    </location>
    <ligand>
        <name>L-aspartate</name>
        <dbReference type="ChEBI" id="CHEBI:29991"/>
    </ligand>
</feature>
<feature type="binding site" evidence="2">
    <location>
        <position position="140"/>
    </location>
    <ligand>
        <name>L-aspartate</name>
        <dbReference type="ChEBI" id="CHEBI:29991"/>
    </ligand>
</feature>
<feature type="binding site" evidence="2">
    <location>
        <position position="185"/>
    </location>
    <ligand>
        <name>L-aspartate</name>
        <dbReference type="ChEBI" id="CHEBI:29991"/>
    </ligand>
</feature>
<feature type="binding site" evidence="2">
    <location>
        <position position="317"/>
    </location>
    <ligand>
        <name>L-aspartate</name>
        <dbReference type="ChEBI" id="CHEBI:29991"/>
    </ligand>
</feature>
<feature type="binding site" evidence="2">
    <location>
        <position position="322"/>
    </location>
    <ligand>
        <name>L-aspartate</name>
        <dbReference type="ChEBI" id="CHEBI:29991"/>
    </ligand>
</feature>
<name>ASPA_HELPY</name>
<dbReference type="EC" id="4.3.1.1" evidence="1"/>
<dbReference type="EMBL" id="AE000511">
    <property type="protein sequence ID" value="AAD07709.1"/>
    <property type="molecule type" value="Genomic_DNA"/>
</dbReference>
<dbReference type="PIR" id="A64601">
    <property type="entry name" value="A64601"/>
</dbReference>
<dbReference type="RefSeq" id="NP_207443.1">
    <property type="nucleotide sequence ID" value="NC_000915.1"/>
</dbReference>
<dbReference type="RefSeq" id="WP_001217520.1">
    <property type="nucleotide sequence ID" value="NC_018939.1"/>
</dbReference>
<dbReference type="SMR" id="P56149"/>
<dbReference type="DIP" id="DIP-3567N"/>
<dbReference type="FunCoup" id="P56149">
    <property type="interactions" value="101"/>
</dbReference>
<dbReference type="IntAct" id="P56149">
    <property type="interactions" value="3"/>
</dbReference>
<dbReference type="MINT" id="P56149"/>
<dbReference type="STRING" id="85962.HP_0649"/>
<dbReference type="PaxDb" id="85962-C694_03355"/>
<dbReference type="EnsemblBacteria" id="AAD07709">
    <property type="protein sequence ID" value="AAD07709"/>
    <property type="gene ID" value="HP_0649"/>
</dbReference>
<dbReference type="KEGG" id="heo:C694_03355"/>
<dbReference type="KEGG" id="hpy:HP_0649"/>
<dbReference type="PATRIC" id="fig|85962.47.peg.699"/>
<dbReference type="eggNOG" id="COG1027">
    <property type="taxonomic scope" value="Bacteria"/>
</dbReference>
<dbReference type="InParanoid" id="P56149"/>
<dbReference type="OrthoDB" id="9802809at2"/>
<dbReference type="PhylomeDB" id="P56149"/>
<dbReference type="Proteomes" id="UP000000429">
    <property type="component" value="Chromosome"/>
</dbReference>
<dbReference type="GO" id="GO:0005829">
    <property type="term" value="C:cytosol"/>
    <property type="evidence" value="ECO:0000318"/>
    <property type="project" value="GO_Central"/>
</dbReference>
<dbReference type="GO" id="GO:0008797">
    <property type="term" value="F:aspartate ammonia-lyase activity"/>
    <property type="evidence" value="ECO:0000318"/>
    <property type="project" value="GO_Central"/>
</dbReference>
<dbReference type="GO" id="GO:0006531">
    <property type="term" value="P:aspartate metabolic process"/>
    <property type="evidence" value="ECO:0000318"/>
    <property type="project" value="GO_Central"/>
</dbReference>
<dbReference type="GO" id="GO:0006099">
    <property type="term" value="P:tricarboxylic acid cycle"/>
    <property type="evidence" value="ECO:0007669"/>
    <property type="project" value="InterPro"/>
</dbReference>
<dbReference type="CDD" id="cd01357">
    <property type="entry name" value="Aspartase"/>
    <property type="match status" value="1"/>
</dbReference>
<dbReference type="FunFam" id="1.10.40.30:FF:000002">
    <property type="entry name" value="Fumarate hydratase class II"/>
    <property type="match status" value="1"/>
</dbReference>
<dbReference type="FunFam" id="1.10.275.10:FF:000001">
    <property type="entry name" value="Fumarate hydratase, mitochondrial"/>
    <property type="match status" value="1"/>
</dbReference>
<dbReference type="FunFam" id="1.20.200.10:FF:000001">
    <property type="entry name" value="Fumarate hydratase, mitochondrial"/>
    <property type="match status" value="1"/>
</dbReference>
<dbReference type="Gene3D" id="1.10.40.30">
    <property type="entry name" value="Fumarase/aspartase (C-terminal domain)"/>
    <property type="match status" value="1"/>
</dbReference>
<dbReference type="Gene3D" id="1.20.200.10">
    <property type="entry name" value="Fumarase/aspartase (Central domain)"/>
    <property type="match status" value="1"/>
</dbReference>
<dbReference type="Gene3D" id="1.10.275.10">
    <property type="entry name" value="Fumarase/aspartase (N-terminal domain)"/>
    <property type="match status" value="1"/>
</dbReference>
<dbReference type="InterPro" id="IPR004708">
    <property type="entry name" value="ApsA"/>
</dbReference>
<dbReference type="InterPro" id="IPR051546">
    <property type="entry name" value="Aspartate_Ammonia-Lyase"/>
</dbReference>
<dbReference type="InterPro" id="IPR024083">
    <property type="entry name" value="Fumarase/histidase_N"/>
</dbReference>
<dbReference type="InterPro" id="IPR018951">
    <property type="entry name" value="Fumarase_C_C"/>
</dbReference>
<dbReference type="InterPro" id="IPR020557">
    <property type="entry name" value="Fumarate_lyase_CS"/>
</dbReference>
<dbReference type="InterPro" id="IPR000362">
    <property type="entry name" value="Fumarate_lyase_fam"/>
</dbReference>
<dbReference type="InterPro" id="IPR022761">
    <property type="entry name" value="Fumarate_lyase_N"/>
</dbReference>
<dbReference type="InterPro" id="IPR008948">
    <property type="entry name" value="L-Aspartase-like"/>
</dbReference>
<dbReference type="NCBIfam" id="TIGR00839">
    <property type="entry name" value="aspA"/>
    <property type="match status" value="1"/>
</dbReference>
<dbReference type="NCBIfam" id="NF008909">
    <property type="entry name" value="PRK12273.1"/>
    <property type="match status" value="1"/>
</dbReference>
<dbReference type="PANTHER" id="PTHR42696">
    <property type="entry name" value="ASPARTATE AMMONIA-LYASE"/>
    <property type="match status" value="1"/>
</dbReference>
<dbReference type="PANTHER" id="PTHR42696:SF2">
    <property type="entry name" value="ASPARTATE AMMONIA-LYASE"/>
    <property type="match status" value="1"/>
</dbReference>
<dbReference type="Pfam" id="PF10415">
    <property type="entry name" value="FumaraseC_C"/>
    <property type="match status" value="1"/>
</dbReference>
<dbReference type="Pfam" id="PF00206">
    <property type="entry name" value="Lyase_1"/>
    <property type="match status" value="1"/>
</dbReference>
<dbReference type="PRINTS" id="PR00145">
    <property type="entry name" value="ARGSUCLYASE"/>
</dbReference>
<dbReference type="PRINTS" id="PR00149">
    <property type="entry name" value="FUMRATELYASE"/>
</dbReference>
<dbReference type="SUPFAM" id="SSF48557">
    <property type="entry name" value="L-aspartase-like"/>
    <property type="match status" value="1"/>
</dbReference>
<dbReference type="PROSITE" id="PS00163">
    <property type="entry name" value="FUMARATE_LYASES"/>
    <property type="match status" value="1"/>
</dbReference>
<evidence type="ECO:0000250" key="1">
    <source>
        <dbReference type="UniProtKB" id="P0AC38"/>
    </source>
</evidence>
<evidence type="ECO:0000250" key="2">
    <source>
        <dbReference type="UniProtKB" id="Q9LCC6"/>
    </source>
</evidence>
<evidence type="ECO:0000305" key="3"/>
<gene>
    <name type="primary">aspA</name>
    <name type="ordered locus">HP_0649</name>
</gene>
<comment type="function">
    <text evidence="1">Catalyzes the reversible conversion of L-aspartate to fumarate and ammonia.</text>
</comment>
<comment type="catalytic activity">
    <reaction evidence="1">
        <text>L-aspartate = fumarate + NH4(+)</text>
        <dbReference type="Rhea" id="RHEA:16601"/>
        <dbReference type="ChEBI" id="CHEBI:28938"/>
        <dbReference type="ChEBI" id="CHEBI:29806"/>
        <dbReference type="ChEBI" id="CHEBI:29991"/>
        <dbReference type="EC" id="4.3.1.1"/>
    </reaction>
</comment>
<comment type="subunit">
    <text evidence="1">Homotetramer.</text>
</comment>
<comment type="similarity">
    <text evidence="3">Belongs to the class-II fumarase/aspartase family. Aspartase subfamily.</text>
</comment>
<protein>
    <recommendedName>
        <fullName evidence="1">Aspartate ammonia-lyase</fullName>
        <shortName evidence="1">Aspartase</shortName>
        <ecNumber evidence="1">4.3.1.1</ecNumber>
    </recommendedName>
</protein>
<reference key="1">
    <citation type="journal article" date="1997" name="Nature">
        <title>The complete genome sequence of the gastric pathogen Helicobacter pylori.</title>
        <authorList>
            <person name="Tomb J.-F."/>
            <person name="White O."/>
            <person name="Kerlavage A.R."/>
            <person name="Clayton R.A."/>
            <person name="Sutton G.G."/>
            <person name="Fleischmann R.D."/>
            <person name="Ketchum K.A."/>
            <person name="Klenk H.-P."/>
            <person name="Gill S.R."/>
            <person name="Dougherty B.A."/>
            <person name="Nelson K.E."/>
            <person name="Quackenbush J."/>
            <person name="Zhou L."/>
            <person name="Kirkness E.F."/>
            <person name="Peterson S.N."/>
            <person name="Loftus B.J."/>
            <person name="Richardson D.L."/>
            <person name="Dodson R.J."/>
            <person name="Khalak H.G."/>
            <person name="Glodek A."/>
            <person name="McKenney K."/>
            <person name="FitzGerald L.M."/>
            <person name="Lee N."/>
            <person name="Adams M.D."/>
            <person name="Hickey E.K."/>
            <person name="Berg D.E."/>
            <person name="Gocayne J.D."/>
            <person name="Utterback T.R."/>
            <person name="Peterson J.D."/>
            <person name="Kelley J.M."/>
            <person name="Cotton M.D."/>
            <person name="Weidman J.F."/>
            <person name="Fujii C."/>
            <person name="Bowman C."/>
            <person name="Watthey L."/>
            <person name="Wallin E."/>
            <person name="Hayes W.S."/>
            <person name="Borodovsky M."/>
            <person name="Karp P.D."/>
            <person name="Smith H.O."/>
            <person name="Fraser C.M."/>
            <person name="Venter J.C."/>
        </authorList>
    </citation>
    <scope>NUCLEOTIDE SEQUENCE [LARGE SCALE GENOMIC DNA]</scope>
    <source>
        <strain>ATCC 700392 / 26695</strain>
    </source>
</reference>
<proteinExistence type="inferred from homology"/>